<protein>
    <recommendedName>
        <fullName evidence="11">Negative regulator of systemic acquired resistance SNI1</fullName>
    </recommendedName>
    <alternativeName>
        <fullName evidence="12">Non-structural maintenance of chromosome element 5</fullName>
        <shortName evidence="12">Non-SMC element 5</shortName>
    </alternativeName>
    <alternativeName>
        <fullName evidence="11">Protein SUPPRESSOR OF NPR1, INDUCIBLE 1</fullName>
        <shortName evidence="11">Suppressor of npr1-1</shortName>
    </alternativeName>
</protein>
<reference key="1">
    <citation type="journal article" date="1999" name="Cell">
        <title>Identification and cloning of a negative regulator of systemic acquired resistance, SNI1, through a screen for suppressors of npr1-1.</title>
        <authorList>
            <person name="Li X."/>
            <person name="Zhang Y."/>
            <person name="Clarke J.D."/>
            <person name="Li Y."/>
            <person name="Dong X."/>
        </authorList>
    </citation>
    <scope>NUCLEOTIDE SEQUENCE [MRNA]</scope>
    <scope>FUNCTION</scope>
    <scope>DISRUPTION PHENOTYPE</scope>
    <scope>SUBCELLULAR LOCATION</scope>
    <scope>TISSUE SPECIFICITY</scope>
    <source>
        <strain>cv. Columbia</strain>
    </source>
</reference>
<reference key="2">
    <citation type="journal article" date="1999" name="Nature">
        <title>Sequence and analysis of chromosome 4 of the plant Arabidopsis thaliana.</title>
        <authorList>
            <person name="Mayer K.F.X."/>
            <person name="Schueller C."/>
            <person name="Wambutt R."/>
            <person name="Murphy G."/>
            <person name="Volckaert G."/>
            <person name="Pohl T."/>
            <person name="Duesterhoeft A."/>
            <person name="Stiekema W."/>
            <person name="Entian K.-D."/>
            <person name="Terryn N."/>
            <person name="Harris B."/>
            <person name="Ansorge W."/>
            <person name="Brandt P."/>
            <person name="Grivell L.A."/>
            <person name="Rieger M."/>
            <person name="Weichselgartner M."/>
            <person name="de Simone V."/>
            <person name="Obermaier B."/>
            <person name="Mache R."/>
            <person name="Mueller M."/>
            <person name="Kreis M."/>
            <person name="Delseny M."/>
            <person name="Puigdomenech P."/>
            <person name="Watson M."/>
            <person name="Schmidtheini T."/>
            <person name="Reichert B."/>
            <person name="Portetelle D."/>
            <person name="Perez-Alonso M."/>
            <person name="Boutry M."/>
            <person name="Bancroft I."/>
            <person name="Vos P."/>
            <person name="Hoheisel J."/>
            <person name="Zimmermann W."/>
            <person name="Wedler H."/>
            <person name="Ridley P."/>
            <person name="Langham S.-A."/>
            <person name="McCullagh B."/>
            <person name="Bilham L."/>
            <person name="Robben J."/>
            <person name="van der Schueren J."/>
            <person name="Grymonprez B."/>
            <person name="Chuang Y.-J."/>
            <person name="Vandenbussche F."/>
            <person name="Braeken M."/>
            <person name="Weltjens I."/>
            <person name="Voet M."/>
            <person name="Bastiaens I."/>
            <person name="Aert R."/>
            <person name="Defoor E."/>
            <person name="Weitzenegger T."/>
            <person name="Bothe G."/>
            <person name="Ramsperger U."/>
            <person name="Hilbert H."/>
            <person name="Braun M."/>
            <person name="Holzer E."/>
            <person name="Brandt A."/>
            <person name="Peters S."/>
            <person name="van Staveren M."/>
            <person name="Dirkse W."/>
            <person name="Mooijman P."/>
            <person name="Klein Lankhorst R."/>
            <person name="Rose M."/>
            <person name="Hauf J."/>
            <person name="Koetter P."/>
            <person name="Berneiser S."/>
            <person name="Hempel S."/>
            <person name="Feldpausch M."/>
            <person name="Lamberth S."/>
            <person name="Van den Daele H."/>
            <person name="De Keyser A."/>
            <person name="Buysshaert C."/>
            <person name="Gielen J."/>
            <person name="Villarroel R."/>
            <person name="De Clercq R."/>
            <person name="van Montagu M."/>
            <person name="Rogers J."/>
            <person name="Cronin A."/>
            <person name="Quail M.A."/>
            <person name="Bray-Allen S."/>
            <person name="Clark L."/>
            <person name="Doggett J."/>
            <person name="Hall S."/>
            <person name="Kay M."/>
            <person name="Lennard N."/>
            <person name="McLay K."/>
            <person name="Mayes R."/>
            <person name="Pettett A."/>
            <person name="Rajandream M.A."/>
            <person name="Lyne M."/>
            <person name="Benes V."/>
            <person name="Rechmann S."/>
            <person name="Borkova D."/>
            <person name="Bloecker H."/>
            <person name="Scharfe M."/>
            <person name="Grimm M."/>
            <person name="Loehnert T.-H."/>
            <person name="Dose S."/>
            <person name="de Haan M."/>
            <person name="Maarse A.C."/>
            <person name="Schaefer M."/>
            <person name="Mueller-Auer S."/>
            <person name="Gabel C."/>
            <person name="Fuchs M."/>
            <person name="Fartmann B."/>
            <person name="Granderath K."/>
            <person name="Dauner D."/>
            <person name="Herzl A."/>
            <person name="Neumann S."/>
            <person name="Argiriou A."/>
            <person name="Vitale D."/>
            <person name="Liguori R."/>
            <person name="Piravandi E."/>
            <person name="Massenet O."/>
            <person name="Quigley F."/>
            <person name="Clabauld G."/>
            <person name="Muendlein A."/>
            <person name="Felber R."/>
            <person name="Schnabl S."/>
            <person name="Hiller R."/>
            <person name="Schmidt W."/>
            <person name="Lecharny A."/>
            <person name="Aubourg S."/>
            <person name="Chefdor F."/>
            <person name="Cooke R."/>
            <person name="Berger C."/>
            <person name="Monfort A."/>
            <person name="Casacuberta E."/>
            <person name="Gibbons T."/>
            <person name="Weber N."/>
            <person name="Vandenbol M."/>
            <person name="Bargues M."/>
            <person name="Terol J."/>
            <person name="Torres A."/>
            <person name="Perez-Perez A."/>
            <person name="Purnelle B."/>
            <person name="Bent E."/>
            <person name="Johnson S."/>
            <person name="Tacon D."/>
            <person name="Jesse T."/>
            <person name="Heijnen L."/>
            <person name="Schwarz S."/>
            <person name="Scholler P."/>
            <person name="Heber S."/>
            <person name="Francs P."/>
            <person name="Bielke C."/>
            <person name="Frishman D."/>
            <person name="Haase D."/>
            <person name="Lemcke K."/>
            <person name="Mewes H.-W."/>
            <person name="Stocker S."/>
            <person name="Zaccaria P."/>
            <person name="Bevan M."/>
            <person name="Wilson R.K."/>
            <person name="de la Bastide M."/>
            <person name="Habermann K."/>
            <person name="Parnell L."/>
            <person name="Dedhia N."/>
            <person name="Gnoj L."/>
            <person name="Schutz K."/>
            <person name="Huang E."/>
            <person name="Spiegel L."/>
            <person name="Sekhon M."/>
            <person name="Murray J."/>
            <person name="Sheet P."/>
            <person name="Cordes M."/>
            <person name="Abu-Threideh J."/>
            <person name="Stoneking T."/>
            <person name="Kalicki J."/>
            <person name="Graves T."/>
            <person name="Harmon G."/>
            <person name="Edwards J."/>
            <person name="Latreille P."/>
            <person name="Courtney L."/>
            <person name="Cloud J."/>
            <person name="Abbott A."/>
            <person name="Scott K."/>
            <person name="Johnson D."/>
            <person name="Minx P."/>
            <person name="Bentley D."/>
            <person name="Fulton B."/>
            <person name="Miller N."/>
            <person name="Greco T."/>
            <person name="Kemp K."/>
            <person name="Kramer J."/>
            <person name="Fulton L."/>
            <person name="Mardis E."/>
            <person name="Dante M."/>
            <person name="Pepin K."/>
            <person name="Hillier L.W."/>
            <person name="Nelson J."/>
            <person name="Spieth J."/>
            <person name="Ryan E."/>
            <person name="Andrews S."/>
            <person name="Geisel C."/>
            <person name="Layman D."/>
            <person name="Du H."/>
            <person name="Ali J."/>
            <person name="Berghoff A."/>
            <person name="Jones K."/>
            <person name="Drone K."/>
            <person name="Cotton M."/>
            <person name="Joshu C."/>
            <person name="Antonoiu B."/>
            <person name="Zidanic M."/>
            <person name="Strong C."/>
            <person name="Sun H."/>
            <person name="Lamar B."/>
            <person name="Yordan C."/>
            <person name="Ma P."/>
            <person name="Zhong J."/>
            <person name="Preston R."/>
            <person name="Vil D."/>
            <person name="Shekher M."/>
            <person name="Matero A."/>
            <person name="Shah R."/>
            <person name="Swaby I.K."/>
            <person name="O'Shaughnessy A."/>
            <person name="Rodriguez M."/>
            <person name="Hoffman J."/>
            <person name="Till S."/>
            <person name="Granat S."/>
            <person name="Shohdy N."/>
            <person name="Hasegawa A."/>
            <person name="Hameed A."/>
            <person name="Lodhi M."/>
            <person name="Johnson A."/>
            <person name="Chen E."/>
            <person name="Marra M.A."/>
            <person name="Martienssen R."/>
            <person name="McCombie W.R."/>
        </authorList>
    </citation>
    <scope>NUCLEOTIDE SEQUENCE [LARGE SCALE GENOMIC DNA]</scope>
    <source>
        <strain>cv. Columbia</strain>
    </source>
</reference>
<reference key="3">
    <citation type="journal article" date="2017" name="Plant J.">
        <title>Araport11: a complete reannotation of the Arabidopsis thaliana reference genome.</title>
        <authorList>
            <person name="Cheng C.Y."/>
            <person name="Krishnakumar V."/>
            <person name="Chan A.P."/>
            <person name="Thibaud-Nissen F."/>
            <person name="Schobel S."/>
            <person name="Town C.D."/>
        </authorList>
    </citation>
    <scope>GENOME REANNOTATION</scope>
    <source>
        <strain>cv. Columbia</strain>
    </source>
</reference>
<reference key="4">
    <citation type="submission" date="2006-10" db="EMBL/GenBank/DDBJ databases">
        <title>Arabidopsis ORF Clones.</title>
        <authorList>
            <person name="Quinitio C."/>
            <person name="Chen H."/>
            <person name="Kim C.J."/>
            <person name="Shinn P."/>
            <person name="Ecker J.R."/>
        </authorList>
    </citation>
    <scope>NUCLEOTIDE SEQUENCE [LARGE SCALE MRNA]</scope>
    <source>
        <strain>cv. Columbia</strain>
    </source>
</reference>
<reference key="5">
    <citation type="submission" date="2002-03" db="EMBL/GenBank/DDBJ databases">
        <title>Full-length cDNA from Arabidopsis thaliana.</title>
        <authorList>
            <person name="Brover V.V."/>
            <person name="Troukhan M.E."/>
            <person name="Alexandrov N.A."/>
            <person name="Lu Y.-P."/>
            <person name="Flavell R.B."/>
            <person name="Feldmann K.A."/>
        </authorList>
    </citation>
    <scope>NUCLEOTIDE SEQUENCE [LARGE SCALE MRNA]</scope>
</reference>
<reference key="6">
    <citation type="journal article" date="2006" name="Plant Cell">
        <title>A comprehensive structure-function analysis of Arabidopsis SNI1 defines essential regions and transcriptional repressor activity.</title>
        <authorList>
            <person name="Mosher R.A."/>
            <person name="Durrant W.E."/>
            <person name="Wang D."/>
            <person name="Song J."/>
            <person name="Dong X."/>
        </authorList>
    </citation>
    <scope>FUNCTION</scope>
    <scope>DISRUPTION PHENOTYPE</scope>
    <scope>SUBCELLULAR LOCATION</scope>
</reference>
<reference key="7">
    <citation type="journal article" date="2007" name="Plant Physiol.">
        <title>Genetic interactions of TGA transcription factors in the regulation of pathogenesis-related genes and disease resistance in Arabidopsis.</title>
        <authorList>
            <person name="Kesarwani M."/>
            <person name="Yoo J."/>
            <person name="Dong X."/>
        </authorList>
    </citation>
    <scope>FUNCTION</scope>
    <scope>DISRUPTION PHENOTYPE</scope>
</reference>
<reference key="8">
    <citation type="journal article" date="2007" name="Proc. Natl. Acad. Sci. U.S.A.">
        <title>Arabidopsis SNI1 and RAD51D regulate both gene transcription and DNA recombination during the defense response.</title>
        <authorList>
            <person name="Durrant W.E."/>
            <person name="Wang S."/>
            <person name="Dong X."/>
        </authorList>
    </citation>
    <scope>FUNCTION</scope>
    <scope>DISRUPTION PHENOTYPE</scope>
</reference>
<reference key="9">
    <citation type="journal article" date="2008" name="Mol. Plant Microbe Interact.">
        <title>Cyst nematode parasitism of Arabidopsis thaliana is inhibited by salicylic acid (SA) and elicits uncoupled SA-independent pathogenesis-related gene expression in roots.</title>
        <authorList>
            <person name="Wubben M.J."/>
            <person name="Jin J."/>
            <person name="Baum T.J."/>
        </authorList>
    </citation>
    <scope>FUNCTION</scope>
    <scope>DISRUPTION PHENOTYPE</scope>
</reference>
<reference key="10">
    <citation type="journal article" date="2010" name="Plant Physiol.">
        <title>The Arabidopsis PR-1 promoter contains multiple integration sites for the coactivator NPR1 and the repressor SNI1.</title>
        <authorList>
            <person name="Pape S."/>
            <person name="Thurow C."/>
            <person name="Gatz C."/>
        </authorList>
    </citation>
    <scope>FUNCTION</scope>
    <scope>DISRUPTION PHENOTYPE</scope>
    <source>
        <strain>cv. Columbia</strain>
    </source>
</reference>
<reference key="11">
    <citation type="journal article" date="2010" name="Proc. Natl. Acad. Sci. U.S.A.">
        <title>Arabidopsis BRCA2 and RAD51 proteins are specifically involved in defense gene transcription during plant immune responses.</title>
        <authorList>
            <person name="Wang S."/>
            <person name="Durrant W.E."/>
            <person name="Song J."/>
            <person name="Spivey N.W."/>
            <person name="Dong X."/>
        </authorList>
    </citation>
    <scope>FUNCTION</scope>
    <scope>DISRUPTION PHENOTYPE</scope>
    <source>
        <strain>cv. Columbia</strain>
    </source>
</reference>
<reference key="12">
    <citation type="journal article" date="2011" name="Cell Host Microbe">
        <title>DNA repair proteins are directly involved in regulation of gene expression during plant immune response.</title>
        <authorList>
            <person name="Song J."/>
            <person name="Durrant W.E."/>
            <person name="Wang S."/>
            <person name="Yan S."/>
            <person name="Tan E.H."/>
            <person name="Dong X."/>
        </authorList>
    </citation>
    <scope>FUNCTION</scope>
    <scope>DISRUPTION PHENOTYPE</scope>
    <scope>INTERACTION WITH SSN2</scope>
</reference>
<reference key="13">
    <citation type="journal article" date="2012" name="Nucleic Acids Res.">
        <title>A NAC transcription factor and SNI1 cooperatively suppress basal pathogen resistance in Arabidopsis thaliana.</title>
        <authorList>
            <person name="Kim H.S."/>
            <person name="Park H.C."/>
            <person name="Kim K.E."/>
            <person name="Jung M.S."/>
            <person name="Han H.J."/>
            <person name="Kim S.H."/>
            <person name="Kwon Y.S."/>
            <person name="Bahk S."/>
            <person name="An J."/>
            <person name="Bae D.W."/>
            <person name="Yun D.-J."/>
            <person name="Kwak S.-S."/>
            <person name="Chung W.S."/>
        </authorList>
    </citation>
    <scope>FUNCTION</scope>
    <scope>DISRUPTION PHENOTYPE</scope>
    <scope>INTERACTION WITH NTL9/CBNAC</scope>
    <source>
        <strain>cv. Columbia</strain>
    </source>
</reference>
<reference key="14">
    <citation type="journal article" date="2013" name="Mol. Cell">
        <title>Salicylic acid activates DNA damage responses to potentiate plant immunity.</title>
        <authorList>
            <person name="Yan S."/>
            <person name="Wang W."/>
            <person name="Marques J."/>
            <person name="Mohan R."/>
            <person name="Saleh A."/>
            <person name="Durrant W.E."/>
            <person name="Song J."/>
            <person name="Dong X."/>
        </authorList>
    </citation>
    <scope>FUNCTION</scope>
    <scope>SUBUNIT</scope>
    <scope>INTERACTION WITH RAD17</scope>
</reference>
<name>SNI1_ARATH</name>
<proteinExistence type="evidence at protein level"/>
<feature type="chain" id="PRO_0000438367" description="Negative regulator of systemic acquired resistance SNI1">
    <location>
        <begin position="1"/>
        <end position="432"/>
    </location>
</feature>
<feature type="sequence conflict" description="In Ref. 5; AAM60892." evidence="13" ref="5">
    <original>L</original>
    <variation>F</variation>
    <location>
        <position position="142"/>
    </location>
</feature>
<feature type="sequence conflict" description="In Ref. 5; AAM60892." evidence="13" ref="5">
    <original>I</original>
    <variation>V</variation>
    <location>
        <position position="362"/>
    </location>
</feature>
<sequence length="432" mass="48812">MSKETKGNNNTSRVMSGYGGSLEANTLAMIDSTGAKDSRDANEDRLQYLEAVRAASLVPENGIPPTNKMYQAIFRILRFGKTLELITASFQLLTQLHQRFPWVYVSDSADQLDIVDEAWSPFNFGSDVDSDEKDLSVRSLFLQQLIQNMNKRVNESEESDLKILGNMFLFKYLAHVLKLDFTPRNQVYEETMNWSLLKESFLNLLLASRKVNFKLLMKDYLSTMCASIDADEKSISLVELHKDMLTAMKELLVMIMELDTSKKKADLEGITSRGDGVRTPAMEIILDELTYDGYLLSKFLQVFDDPKWKLEIVLQYLTKYIPKPVVRTRRTTVPQAEDSKTLNGILKTFSNGTNPKNITKKIGPDIVQILIGHAFLARLTFSDPHEGDSISEICSSIISAFTSLKRVDQKIEILPFGKEVLFTAGMVLKAKA</sequence>
<accession>Q9SWA6</accession>
<accession>Q8LGF4</accession>
<comment type="function">
    <text evidence="1 2 3 4 5 6 7 8 9 10">Component of the SMC5-SMC6 complex, a complex involved in repair of DNA double-strand breaks by homologous recombination (PubMed:24207055). Transcription repressor that prevents expression of pathogenesis-related genes (PR) via histone modifications and binding negative cis-acting elements at their promoters (PubMed:16766691, PubMed:17369431, PubMed:20935179, PubMed:21320694). Negative regulator of hypersensitive response (HR) and systemic acquired resistance (SAR) required to dampen the basal expression of pathogenesis related (PR) genes (PubMed:10458608, PubMed:16766691, PubMed:17360504, PubMed:21149701). Functions synergistically with NTL9/CBNAC as negative regulator of pathogen-induced PR1 expression and basal resistance to a virulent strain of P.syringae (PubMed:22826500). Binds to the PR1 gene promoter to suppress defense response in the absence of pathogen challenge and is removed in response to induction (PubMed:21320694, PubMed:22826500). Negatively regulates both gene expression and DNA recombination during pathogen infection, thus being involved in short-term defense response and a long-term survival strategy (PubMed:17360504). Prevents effective immune responses that involve activation of DNA damage responses, probably by negatively regulating the DNA damage sensors RAD17 and ATR (PubMed:24207055). Negative regulator of defenses against the beet cyst nematode H.schachtii (PubMed:18321188).</text>
</comment>
<comment type="subunit">
    <text evidence="8 9 10">Interacts with SSN2 (PubMed:21320694). Binds to NTL9/CBNAC to promote its binding to promoters of target genes (PubMed:22826500). Component of the SMC5-SMC6 complex which consists at least of SMC5 and SMC6B. Interacts with RAD17 (PubMed:24207055).</text>
</comment>
<comment type="subcellular location">
    <subcellularLocation>
        <location evidence="1 2">Nucleus</location>
    </subcellularLocation>
    <text evidence="2">Also detectable in some fluorescent loci peripheral to the nucleus.</text>
</comment>
<comment type="tissue specificity">
    <text evidence="1">Expressed at low levels in the veins.</text>
</comment>
<comment type="disruption phenotype">
    <text evidence="1 2 3 4 5 6 7 8 9 10">Accumulation of DNA damage leading to constitutively activated DNA damage responses (DDR) (PubMed:24207055). Increased basal expression of pathogenesis-related (PR) genes (e.g. PR1) and hypersensitive response (HR) (PubMed:16766691, PubMed:17360504, PubMed:17369431, PubMed:20935179, PubMed:21149701, PubMed:21320694). Chromatin modifications at the PR-1 promoter that mimic induction (e.g. AcH3 and MeH3K4) (PubMed:16766691). Dwarf plants with distorted leaves, reduced root length, early flowering and reduced fertility (PubMed:16766691, PubMed:17360504, PubMed:21320694). Decreased susceptibility to the beet cyst nematode H.schachtii (PubMed:18321188). Mutant plants display enhanced resistance to the bacterial pathogen P.syringae pv. tomato DC3000 (PubMed:22826500). Constitutively elevated levels of somatic homologous recombination (PubMed:17360504). Suppressor of the npr1-1 mutant phenotypes, including systemic acquired resistance (SAR) and normal levels of PR1 restoration (PubMed:10458608, PubMed:20935179).</text>
</comment>
<dbReference type="EMBL" id="AF169596">
    <property type="protein sequence ID" value="AAD50900.1"/>
    <property type="molecule type" value="mRNA"/>
</dbReference>
<dbReference type="EMBL" id="AL021710">
    <property type="status" value="NOT_ANNOTATED_CDS"/>
    <property type="molecule type" value="Genomic_DNA"/>
</dbReference>
<dbReference type="EMBL" id="CP002687">
    <property type="protein sequence ID" value="AEE84048.1"/>
    <property type="molecule type" value="Genomic_DNA"/>
</dbReference>
<dbReference type="EMBL" id="BT029212">
    <property type="protein sequence ID" value="ABJ17147.1"/>
    <property type="molecule type" value="mRNA"/>
</dbReference>
<dbReference type="EMBL" id="AY084302">
    <property type="protein sequence ID" value="AAM60892.1"/>
    <property type="molecule type" value="mRNA"/>
</dbReference>
<dbReference type="RefSeq" id="NP_567557.1">
    <property type="nucleotide sequence ID" value="NM_117959.1"/>
</dbReference>
<dbReference type="SMR" id="Q9SWA6"/>
<dbReference type="FunCoup" id="Q9SWA6">
    <property type="interactions" value="477"/>
</dbReference>
<dbReference type="IntAct" id="Q9SWA6">
    <property type="interactions" value="6"/>
</dbReference>
<dbReference type="STRING" id="3702.Q9SWA6"/>
<dbReference type="PaxDb" id="3702-AT4G18470.1"/>
<dbReference type="ProteomicsDB" id="232476"/>
<dbReference type="EnsemblPlants" id="AT4G18470.1">
    <property type="protein sequence ID" value="AT4G18470.1"/>
    <property type="gene ID" value="AT4G18470"/>
</dbReference>
<dbReference type="GeneID" id="827577"/>
<dbReference type="Gramene" id="AT4G18470.1">
    <property type="protein sequence ID" value="AT4G18470.1"/>
    <property type="gene ID" value="AT4G18470"/>
</dbReference>
<dbReference type="KEGG" id="ath:AT4G18470"/>
<dbReference type="Araport" id="AT4G18470"/>
<dbReference type="TAIR" id="AT4G18470">
    <property type="gene designation" value="SNI1"/>
</dbReference>
<dbReference type="eggNOG" id="ENOG502RBSJ">
    <property type="taxonomic scope" value="Eukaryota"/>
</dbReference>
<dbReference type="HOGENOM" id="CLU_045759_1_0_1"/>
<dbReference type="InParanoid" id="Q9SWA6"/>
<dbReference type="OMA" id="CIAMQKF"/>
<dbReference type="PhylomeDB" id="Q9SWA6"/>
<dbReference type="PRO" id="PR:Q9SWA6"/>
<dbReference type="Proteomes" id="UP000006548">
    <property type="component" value="Chromosome 4"/>
</dbReference>
<dbReference type="ExpressionAtlas" id="Q9SWA6">
    <property type="expression patterns" value="baseline and differential"/>
</dbReference>
<dbReference type="GO" id="GO:0005634">
    <property type="term" value="C:nucleus"/>
    <property type="evidence" value="ECO:0000314"/>
    <property type="project" value="UniProtKB"/>
</dbReference>
<dbReference type="GO" id="GO:0030915">
    <property type="term" value="C:Smc5-Smc6 complex"/>
    <property type="evidence" value="ECO:0000314"/>
    <property type="project" value="UniProtKB"/>
</dbReference>
<dbReference type="GO" id="GO:0000976">
    <property type="term" value="F:transcription cis-regulatory region binding"/>
    <property type="evidence" value="ECO:0000314"/>
    <property type="project" value="UniProtKB"/>
</dbReference>
<dbReference type="GO" id="GO:0006338">
    <property type="term" value="P:chromatin remodeling"/>
    <property type="evidence" value="ECO:0000314"/>
    <property type="project" value="UniProtKB"/>
</dbReference>
<dbReference type="GO" id="GO:0002215">
    <property type="term" value="P:defense response to nematode"/>
    <property type="evidence" value="ECO:0000315"/>
    <property type="project" value="UniProtKB"/>
</dbReference>
<dbReference type="GO" id="GO:0006974">
    <property type="term" value="P:DNA damage response"/>
    <property type="evidence" value="ECO:0000315"/>
    <property type="project" value="UniProtKB"/>
</dbReference>
<dbReference type="GO" id="GO:0006281">
    <property type="term" value="P:DNA repair"/>
    <property type="evidence" value="ECO:0007669"/>
    <property type="project" value="UniProtKB-KW"/>
</dbReference>
<dbReference type="GO" id="GO:0031348">
    <property type="term" value="P:negative regulation of defense response"/>
    <property type="evidence" value="ECO:0000315"/>
    <property type="project" value="UniProtKB"/>
</dbReference>
<dbReference type="GO" id="GO:0045892">
    <property type="term" value="P:negative regulation of DNA-templated transcription"/>
    <property type="evidence" value="ECO:0000314"/>
    <property type="project" value="TAIR"/>
</dbReference>
<dbReference type="GO" id="GO:0010113">
    <property type="term" value="P:negative regulation of systemic acquired resistance"/>
    <property type="evidence" value="ECO:0000315"/>
    <property type="project" value="TAIR"/>
</dbReference>
<dbReference type="GO" id="GO:0009626">
    <property type="term" value="P:plant-type hypersensitive response"/>
    <property type="evidence" value="ECO:0007669"/>
    <property type="project" value="UniProtKB-KW"/>
</dbReference>
<dbReference type="GO" id="GO:0016444">
    <property type="term" value="P:somatic cell DNA recombination"/>
    <property type="evidence" value="ECO:0000315"/>
    <property type="project" value="TAIR"/>
</dbReference>
<dbReference type="GO" id="GO:0009627">
    <property type="term" value="P:systemic acquired resistance"/>
    <property type="evidence" value="ECO:0000304"/>
    <property type="project" value="TAIR"/>
</dbReference>
<dbReference type="InterPro" id="IPR034561">
    <property type="entry name" value="SNI1"/>
</dbReference>
<dbReference type="PANTHER" id="PTHR37243">
    <property type="entry name" value="NEGATIVE REGULATOR OF SYSTEMIC ACQUIRED RESISTANCE SNI1"/>
    <property type="match status" value="1"/>
</dbReference>
<dbReference type="PANTHER" id="PTHR37243:SF2">
    <property type="entry name" value="NEGATIVE REGULATOR OF SYSTEMIC ACQUIRED RESISTANCE SNI1"/>
    <property type="match status" value="1"/>
</dbReference>
<gene>
    <name evidence="11" type="primary">SNI1</name>
    <name evidence="12" type="synonym">NSE5</name>
    <name evidence="14" type="ordered locus">At4g18470</name>
    <name evidence="15" type="ORF">F28J12.3</name>
</gene>
<organism>
    <name type="scientific">Arabidopsis thaliana</name>
    <name type="common">Mouse-ear cress</name>
    <dbReference type="NCBI Taxonomy" id="3702"/>
    <lineage>
        <taxon>Eukaryota</taxon>
        <taxon>Viridiplantae</taxon>
        <taxon>Streptophyta</taxon>
        <taxon>Embryophyta</taxon>
        <taxon>Tracheophyta</taxon>
        <taxon>Spermatophyta</taxon>
        <taxon>Magnoliopsida</taxon>
        <taxon>eudicotyledons</taxon>
        <taxon>Gunneridae</taxon>
        <taxon>Pentapetalae</taxon>
        <taxon>rosids</taxon>
        <taxon>malvids</taxon>
        <taxon>Brassicales</taxon>
        <taxon>Brassicaceae</taxon>
        <taxon>Camelineae</taxon>
        <taxon>Arabidopsis</taxon>
    </lineage>
</organism>
<keyword id="KW-0227">DNA damage</keyword>
<keyword id="KW-0233">DNA recombination</keyword>
<keyword id="KW-0234">DNA repair</keyword>
<keyword id="KW-0238">DNA-binding</keyword>
<keyword id="KW-0381">Hypersensitive response</keyword>
<keyword id="KW-0539">Nucleus</keyword>
<keyword id="KW-0611">Plant defense</keyword>
<keyword id="KW-1185">Reference proteome</keyword>
<keyword id="KW-0678">Repressor</keyword>
<keyword id="KW-0804">Transcription</keyword>
<keyword id="KW-0805">Transcription regulation</keyword>
<evidence type="ECO:0000269" key="1">
    <source>
    </source>
</evidence>
<evidence type="ECO:0000269" key="2">
    <source>
    </source>
</evidence>
<evidence type="ECO:0000269" key="3">
    <source>
    </source>
</evidence>
<evidence type="ECO:0000269" key="4">
    <source>
    </source>
</evidence>
<evidence type="ECO:0000269" key="5">
    <source>
    </source>
</evidence>
<evidence type="ECO:0000269" key="6">
    <source>
    </source>
</evidence>
<evidence type="ECO:0000269" key="7">
    <source>
    </source>
</evidence>
<evidence type="ECO:0000269" key="8">
    <source>
    </source>
</evidence>
<evidence type="ECO:0000269" key="9">
    <source>
    </source>
</evidence>
<evidence type="ECO:0000269" key="10">
    <source>
    </source>
</evidence>
<evidence type="ECO:0000303" key="11">
    <source>
    </source>
</evidence>
<evidence type="ECO:0000303" key="12">
    <source>
    </source>
</evidence>
<evidence type="ECO:0000305" key="13"/>
<evidence type="ECO:0000312" key="14">
    <source>
        <dbReference type="Araport" id="AT4G18470"/>
    </source>
</evidence>
<evidence type="ECO:0000312" key="15">
    <source>
        <dbReference type="EMBL" id="AL021710"/>
    </source>
</evidence>